<accession>Q9KPH7</accession>
<organism>
    <name type="scientific">Vibrio cholerae serotype O1 (strain ATCC 39315 / El Tor Inaba N16961)</name>
    <dbReference type="NCBI Taxonomy" id="243277"/>
    <lineage>
        <taxon>Bacteria</taxon>
        <taxon>Pseudomonadati</taxon>
        <taxon>Pseudomonadota</taxon>
        <taxon>Gammaproteobacteria</taxon>
        <taxon>Vibrionales</taxon>
        <taxon>Vibrionaceae</taxon>
        <taxon>Vibrio</taxon>
    </lineage>
</organism>
<feature type="chain" id="PRO_0000141504" description="4-hydroxy-tetrahydrodipicolinate reductase">
    <location>
        <begin position="1"/>
        <end position="269"/>
    </location>
</feature>
<feature type="active site" description="Proton donor/acceptor" evidence="1">
    <location>
        <position position="155"/>
    </location>
</feature>
<feature type="active site" description="Proton donor" evidence="1">
    <location>
        <position position="159"/>
    </location>
</feature>
<feature type="binding site" evidence="1">
    <location>
        <begin position="8"/>
        <end position="13"/>
    </location>
    <ligand>
        <name>NAD(+)</name>
        <dbReference type="ChEBI" id="CHEBI:57540"/>
    </ligand>
</feature>
<feature type="binding site" evidence="1">
    <location>
        <position position="34"/>
    </location>
    <ligand>
        <name>NAD(+)</name>
        <dbReference type="ChEBI" id="CHEBI:57540"/>
    </ligand>
</feature>
<feature type="binding site" evidence="1">
    <location>
        <position position="35"/>
    </location>
    <ligand>
        <name>NADP(+)</name>
        <dbReference type="ChEBI" id="CHEBI:58349"/>
    </ligand>
</feature>
<feature type="binding site" evidence="1">
    <location>
        <begin position="98"/>
        <end position="100"/>
    </location>
    <ligand>
        <name>NAD(+)</name>
        <dbReference type="ChEBI" id="CHEBI:57540"/>
    </ligand>
</feature>
<feature type="binding site" evidence="1">
    <location>
        <begin position="122"/>
        <end position="125"/>
    </location>
    <ligand>
        <name>NAD(+)</name>
        <dbReference type="ChEBI" id="CHEBI:57540"/>
    </ligand>
</feature>
<feature type="binding site" evidence="1">
    <location>
        <position position="156"/>
    </location>
    <ligand>
        <name>(S)-2,3,4,5-tetrahydrodipicolinate</name>
        <dbReference type="ChEBI" id="CHEBI:16845"/>
    </ligand>
</feature>
<feature type="binding site" evidence="1">
    <location>
        <begin position="165"/>
        <end position="166"/>
    </location>
    <ligand>
        <name>(S)-2,3,4,5-tetrahydrodipicolinate</name>
        <dbReference type="ChEBI" id="CHEBI:16845"/>
    </ligand>
</feature>
<sequence length="269" mass="28619">MVRIAIAGAAGRMGRNLVKATHQNPLSELGAGSERPESSLVGVDIGELCGIGKQGIVLVDNLEQAVEQFDVIIDFTAPASTLANLALCEQHGKKLVIGTTGFTDAQRQTIEQAAKKIPIVMAPNYSVGVNLVFKLLEKAAKVMGDYCDIEIIEAHHRHKVDAPSGTAIGMGEAIAHAMGNQLSDVAVYAREGITGERSRNEIGFATIRAGDIIGEHTAMFADIGERVEITHKATDRMTFANGAVKAAIWLAEQPAGFYTMIDVLGLNDL</sequence>
<protein>
    <recommendedName>
        <fullName evidence="1">4-hydroxy-tetrahydrodipicolinate reductase</fullName>
        <shortName evidence="1">HTPA reductase</shortName>
        <ecNumber evidence="1">1.17.1.8</ecNumber>
    </recommendedName>
</protein>
<proteinExistence type="inferred from homology"/>
<gene>
    <name evidence="1" type="primary">dapB</name>
    <name type="ordered locus">VC_2391</name>
</gene>
<name>DAPB_VIBCH</name>
<keyword id="KW-0028">Amino-acid biosynthesis</keyword>
<keyword id="KW-0963">Cytoplasm</keyword>
<keyword id="KW-0220">Diaminopimelate biosynthesis</keyword>
<keyword id="KW-0457">Lysine biosynthesis</keyword>
<keyword id="KW-0520">NAD</keyword>
<keyword id="KW-0521">NADP</keyword>
<keyword id="KW-0560">Oxidoreductase</keyword>
<keyword id="KW-1185">Reference proteome</keyword>
<reference key="1">
    <citation type="journal article" date="2000" name="Nature">
        <title>DNA sequence of both chromosomes of the cholera pathogen Vibrio cholerae.</title>
        <authorList>
            <person name="Heidelberg J.F."/>
            <person name="Eisen J.A."/>
            <person name="Nelson W.C."/>
            <person name="Clayton R.A."/>
            <person name="Gwinn M.L."/>
            <person name="Dodson R.J."/>
            <person name="Haft D.H."/>
            <person name="Hickey E.K."/>
            <person name="Peterson J.D."/>
            <person name="Umayam L.A."/>
            <person name="Gill S.R."/>
            <person name="Nelson K.E."/>
            <person name="Read T.D."/>
            <person name="Tettelin H."/>
            <person name="Richardson D.L."/>
            <person name="Ermolaeva M.D."/>
            <person name="Vamathevan J.J."/>
            <person name="Bass S."/>
            <person name="Qin H."/>
            <person name="Dragoi I."/>
            <person name="Sellers P."/>
            <person name="McDonald L.A."/>
            <person name="Utterback T.R."/>
            <person name="Fleischmann R.D."/>
            <person name="Nierman W.C."/>
            <person name="White O."/>
            <person name="Salzberg S.L."/>
            <person name="Smith H.O."/>
            <person name="Colwell R.R."/>
            <person name="Mekalanos J.J."/>
            <person name="Venter J.C."/>
            <person name="Fraser C.M."/>
        </authorList>
    </citation>
    <scope>NUCLEOTIDE SEQUENCE [LARGE SCALE GENOMIC DNA]</scope>
    <source>
        <strain>ATCC 39315 / El Tor Inaba N16961</strain>
    </source>
</reference>
<comment type="function">
    <text evidence="1">Catalyzes the conversion of 4-hydroxy-tetrahydrodipicolinate (HTPA) to tetrahydrodipicolinate.</text>
</comment>
<comment type="catalytic activity">
    <reaction evidence="1">
        <text>(S)-2,3,4,5-tetrahydrodipicolinate + NAD(+) + H2O = (2S,4S)-4-hydroxy-2,3,4,5-tetrahydrodipicolinate + NADH + H(+)</text>
        <dbReference type="Rhea" id="RHEA:35323"/>
        <dbReference type="ChEBI" id="CHEBI:15377"/>
        <dbReference type="ChEBI" id="CHEBI:15378"/>
        <dbReference type="ChEBI" id="CHEBI:16845"/>
        <dbReference type="ChEBI" id="CHEBI:57540"/>
        <dbReference type="ChEBI" id="CHEBI:57945"/>
        <dbReference type="ChEBI" id="CHEBI:67139"/>
        <dbReference type="EC" id="1.17.1.8"/>
    </reaction>
</comment>
<comment type="catalytic activity">
    <reaction evidence="1">
        <text>(S)-2,3,4,5-tetrahydrodipicolinate + NADP(+) + H2O = (2S,4S)-4-hydroxy-2,3,4,5-tetrahydrodipicolinate + NADPH + H(+)</text>
        <dbReference type="Rhea" id="RHEA:35331"/>
        <dbReference type="ChEBI" id="CHEBI:15377"/>
        <dbReference type="ChEBI" id="CHEBI:15378"/>
        <dbReference type="ChEBI" id="CHEBI:16845"/>
        <dbReference type="ChEBI" id="CHEBI:57783"/>
        <dbReference type="ChEBI" id="CHEBI:58349"/>
        <dbReference type="ChEBI" id="CHEBI:67139"/>
        <dbReference type="EC" id="1.17.1.8"/>
    </reaction>
</comment>
<comment type="pathway">
    <text evidence="1">Amino-acid biosynthesis; L-lysine biosynthesis via DAP pathway; (S)-tetrahydrodipicolinate from L-aspartate: step 4/4.</text>
</comment>
<comment type="subcellular location">
    <subcellularLocation>
        <location evidence="1">Cytoplasm</location>
    </subcellularLocation>
</comment>
<comment type="similarity">
    <text evidence="1">Belongs to the DapB family.</text>
</comment>
<comment type="caution">
    <text evidence="2">Was originally thought to be a dihydrodipicolinate reductase (DHDPR), catalyzing the conversion of dihydrodipicolinate to tetrahydrodipicolinate. However, it was shown in E.coli that the substrate of the enzymatic reaction is not dihydrodipicolinate (DHDP) but in fact (2S,4S)-4-hydroxy-2,3,4,5-tetrahydrodipicolinic acid (HTPA), the product released by the DapA-catalyzed reaction.</text>
</comment>
<evidence type="ECO:0000255" key="1">
    <source>
        <dbReference type="HAMAP-Rule" id="MF_00102"/>
    </source>
</evidence>
<evidence type="ECO:0000305" key="2"/>
<dbReference type="EC" id="1.17.1.8" evidence="1"/>
<dbReference type="EMBL" id="AE003852">
    <property type="protein sequence ID" value="AAF95534.1"/>
    <property type="molecule type" value="Genomic_DNA"/>
</dbReference>
<dbReference type="PIR" id="C82080">
    <property type="entry name" value="C82080"/>
</dbReference>
<dbReference type="RefSeq" id="NP_232021.1">
    <property type="nucleotide sequence ID" value="NC_002505.1"/>
</dbReference>
<dbReference type="RefSeq" id="WP_000251588.1">
    <property type="nucleotide sequence ID" value="NZ_LT906614.1"/>
</dbReference>
<dbReference type="SMR" id="Q9KPH7"/>
<dbReference type="STRING" id="243277.VC_2391"/>
<dbReference type="DNASU" id="2613060"/>
<dbReference type="EnsemblBacteria" id="AAF95534">
    <property type="protein sequence ID" value="AAF95534"/>
    <property type="gene ID" value="VC_2391"/>
</dbReference>
<dbReference type="KEGG" id="vch:VC_2391"/>
<dbReference type="PATRIC" id="fig|243277.26.peg.2277"/>
<dbReference type="eggNOG" id="COG0289">
    <property type="taxonomic scope" value="Bacteria"/>
</dbReference>
<dbReference type="HOGENOM" id="CLU_047479_2_1_6"/>
<dbReference type="UniPathway" id="UPA00034">
    <property type="reaction ID" value="UER00018"/>
</dbReference>
<dbReference type="Proteomes" id="UP000000584">
    <property type="component" value="Chromosome 1"/>
</dbReference>
<dbReference type="GO" id="GO:0005829">
    <property type="term" value="C:cytosol"/>
    <property type="evidence" value="ECO:0000318"/>
    <property type="project" value="GO_Central"/>
</dbReference>
<dbReference type="GO" id="GO:0008839">
    <property type="term" value="F:4-hydroxy-tetrahydrodipicolinate reductase"/>
    <property type="evidence" value="ECO:0000318"/>
    <property type="project" value="GO_Central"/>
</dbReference>
<dbReference type="GO" id="GO:0051287">
    <property type="term" value="F:NAD binding"/>
    <property type="evidence" value="ECO:0007669"/>
    <property type="project" value="UniProtKB-UniRule"/>
</dbReference>
<dbReference type="GO" id="GO:0050661">
    <property type="term" value="F:NADP binding"/>
    <property type="evidence" value="ECO:0007669"/>
    <property type="project" value="UniProtKB-UniRule"/>
</dbReference>
<dbReference type="GO" id="GO:0016726">
    <property type="term" value="F:oxidoreductase activity, acting on CH or CH2 groups, NAD or NADP as acceptor"/>
    <property type="evidence" value="ECO:0007669"/>
    <property type="project" value="UniProtKB-UniRule"/>
</dbReference>
<dbReference type="GO" id="GO:0019877">
    <property type="term" value="P:diaminopimelate biosynthetic process"/>
    <property type="evidence" value="ECO:0000318"/>
    <property type="project" value="GO_Central"/>
</dbReference>
<dbReference type="GO" id="GO:0009089">
    <property type="term" value="P:lysine biosynthetic process via diaminopimelate"/>
    <property type="evidence" value="ECO:0007669"/>
    <property type="project" value="UniProtKB-UniRule"/>
</dbReference>
<dbReference type="CDD" id="cd02274">
    <property type="entry name" value="DHDPR_N"/>
    <property type="match status" value="1"/>
</dbReference>
<dbReference type="FunFam" id="3.30.360.10:FF:000004">
    <property type="entry name" value="4-hydroxy-tetrahydrodipicolinate reductase"/>
    <property type="match status" value="1"/>
</dbReference>
<dbReference type="FunFam" id="3.40.50.720:FF:000048">
    <property type="entry name" value="4-hydroxy-tetrahydrodipicolinate reductase"/>
    <property type="match status" value="1"/>
</dbReference>
<dbReference type="Gene3D" id="3.30.360.10">
    <property type="entry name" value="Dihydrodipicolinate Reductase, domain 2"/>
    <property type="match status" value="1"/>
</dbReference>
<dbReference type="Gene3D" id="3.40.50.720">
    <property type="entry name" value="NAD(P)-binding Rossmann-like Domain"/>
    <property type="match status" value="1"/>
</dbReference>
<dbReference type="HAMAP" id="MF_00102">
    <property type="entry name" value="DapB"/>
    <property type="match status" value="1"/>
</dbReference>
<dbReference type="InterPro" id="IPR022663">
    <property type="entry name" value="DapB_C"/>
</dbReference>
<dbReference type="InterPro" id="IPR000846">
    <property type="entry name" value="DapB_N"/>
</dbReference>
<dbReference type="InterPro" id="IPR022664">
    <property type="entry name" value="DapB_N_CS"/>
</dbReference>
<dbReference type="InterPro" id="IPR023940">
    <property type="entry name" value="DHDPR_bac"/>
</dbReference>
<dbReference type="InterPro" id="IPR036291">
    <property type="entry name" value="NAD(P)-bd_dom_sf"/>
</dbReference>
<dbReference type="NCBIfam" id="TIGR00036">
    <property type="entry name" value="dapB"/>
    <property type="match status" value="1"/>
</dbReference>
<dbReference type="PANTHER" id="PTHR20836:SF0">
    <property type="entry name" value="4-HYDROXY-TETRAHYDRODIPICOLINATE REDUCTASE 1, CHLOROPLASTIC-RELATED"/>
    <property type="match status" value="1"/>
</dbReference>
<dbReference type="PANTHER" id="PTHR20836">
    <property type="entry name" value="DIHYDRODIPICOLINATE REDUCTASE"/>
    <property type="match status" value="1"/>
</dbReference>
<dbReference type="Pfam" id="PF05173">
    <property type="entry name" value="DapB_C"/>
    <property type="match status" value="1"/>
</dbReference>
<dbReference type="Pfam" id="PF01113">
    <property type="entry name" value="DapB_N"/>
    <property type="match status" value="1"/>
</dbReference>
<dbReference type="PIRSF" id="PIRSF000161">
    <property type="entry name" value="DHPR"/>
    <property type="match status" value="1"/>
</dbReference>
<dbReference type="SUPFAM" id="SSF55347">
    <property type="entry name" value="Glyceraldehyde-3-phosphate dehydrogenase-like, C-terminal domain"/>
    <property type="match status" value="1"/>
</dbReference>
<dbReference type="SUPFAM" id="SSF51735">
    <property type="entry name" value="NAD(P)-binding Rossmann-fold domains"/>
    <property type="match status" value="1"/>
</dbReference>
<dbReference type="PROSITE" id="PS01298">
    <property type="entry name" value="DAPB"/>
    <property type="match status" value="1"/>
</dbReference>